<comment type="function">
    <text>Member of the two-component regulatory system LytS/LytT that probably regulates genes involved in cell wall metabolism.</text>
</comment>
<comment type="subcellular location">
    <subcellularLocation>
        <location evidence="3">Cytoplasm</location>
    </subcellularLocation>
</comment>
<comment type="PTM">
    <text evidence="3">Phosphorylated by LytS.</text>
</comment>
<gene>
    <name type="primary">lytT</name>
    <name type="ordered locus">BC_5440</name>
</gene>
<dbReference type="EMBL" id="AE016877">
    <property type="protein sequence ID" value="AAP12302.1"/>
    <property type="molecule type" value="Genomic_DNA"/>
</dbReference>
<dbReference type="RefSeq" id="NP_835101.1">
    <property type="nucleotide sequence ID" value="NC_004722.1"/>
</dbReference>
<dbReference type="RefSeq" id="WP_000921843.1">
    <property type="nucleotide sequence ID" value="NZ_CP138336.1"/>
</dbReference>
<dbReference type="SMR" id="Q814J1"/>
<dbReference type="STRING" id="226900.BC_5440"/>
<dbReference type="KEGG" id="bce:BC5440"/>
<dbReference type="PATRIC" id="fig|226900.8.peg.5620"/>
<dbReference type="HOGENOM" id="CLU_000445_14_1_9"/>
<dbReference type="OrthoDB" id="9809318at2"/>
<dbReference type="Proteomes" id="UP000001417">
    <property type="component" value="Chromosome"/>
</dbReference>
<dbReference type="GO" id="GO:0005829">
    <property type="term" value="C:cytosol"/>
    <property type="evidence" value="ECO:0000318"/>
    <property type="project" value="GO_Central"/>
</dbReference>
<dbReference type="GO" id="GO:0032993">
    <property type="term" value="C:protein-DNA complex"/>
    <property type="evidence" value="ECO:0000318"/>
    <property type="project" value="GO_Central"/>
</dbReference>
<dbReference type="GO" id="GO:0000156">
    <property type="term" value="F:phosphorelay response regulator activity"/>
    <property type="evidence" value="ECO:0000318"/>
    <property type="project" value="GO_Central"/>
</dbReference>
<dbReference type="GO" id="GO:0000976">
    <property type="term" value="F:transcription cis-regulatory region binding"/>
    <property type="evidence" value="ECO:0000318"/>
    <property type="project" value="GO_Central"/>
</dbReference>
<dbReference type="GO" id="GO:0006355">
    <property type="term" value="P:regulation of DNA-templated transcription"/>
    <property type="evidence" value="ECO:0000318"/>
    <property type="project" value="GO_Central"/>
</dbReference>
<dbReference type="CDD" id="cd17532">
    <property type="entry name" value="REC_LytTR_AlgR-like"/>
    <property type="match status" value="1"/>
</dbReference>
<dbReference type="FunFam" id="3.40.50.2300:FF:000134">
    <property type="entry name" value="Autolysin response regulator LytR"/>
    <property type="match status" value="1"/>
</dbReference>
<dbReference type="FunFam" id="2.40.50.40:FF:000027">
    <property type="entry name" value="DNA-binding response regulator"/>
    <property type="match status" value="1"/>
</dbReference>
<dbReference type="FunFam" id="2.20.25.10:FF:000010">
    <property type="entry name" value="Two-component system response regulator"/>
    <property type="match status" value="1"/>
</dbReference>
<dbReference type="Gene3D" id="2.20.25.10">
    <property type="match status" value="1"/>
</dbReference>
<dbReference type="Gene3D" id="2.40.50.40">
    <property type="match status" value="1"/>
</dbReference>
<dbReference type="Gene3D" id="3.40.50.2300">
    <property type="match status" value="1"/>
</dbReference>
<dbReference type="InterPro" id="IPR011006">
    <property type="entry name" value="CheY-like_superfamily"/>
</dbReference>
<dbReference type="InterPro" id="IPR046947">
    <property type="entry name" value="LytR-like"/>
</dbReference>
<dbReference type="InterPro" id="IPR007492">
    <property type="entry name" value="LytTR_DNA-bd_dom"/>
</dbReference>
<dbReference type="InterPro" id="IPR001789">
    <property type="entry name" value="Sig_transdc_resp-reg_receiver"/>
</dbReference>
<dbReference type="PANTHER" id="PTHR37299:SF1">
    <property type="entry name" value="STAGE 0 SPORULATION PROTEIN A HOMOLOG"/>
    <property type="match status" value="1"/>
</dbReference>
<dbReference type="PANTHER" id="PTHR37299">
    <property type="entry name" value="TRANSCRIPTIONAL REGULATOR-RELATED"/>
    <property type="match status" value="1"/>
</dbReference>
<dbReference type="Pfam" id="PF04397">
    <property type="entry name" value="LytTR"/>
    <property type="match status" value="1"/>
</dbReference>
<dbReference type="Pfam" id="PF00072">
    <property type="entry name" value="Response_reg"/>
    <property type="match status" value="1"/>
</dbReference>
<dbReference type="SMART" id="SM00850">
    <property type="entry name" value="LytTR"/>
    <property type="match status" value="1"/>
</dbReference>
<dbReference type="SMART" id="SM00448">
    <property type="entry name" value="REC"/>
    <property type="match status" value="1"/>
</dbReference>
<dbReference type="SUPFAM" id="SSF52172">
    <property type="entry name" value="CheY-like"/>
    <property type="match status" value="1"/>
</dbReference>
<dbReference type="PROSITE" id="PS50930">
    <property type="entry name" value="HTH_LYTTR"/>
    <property type="match status" value="1"/>
</dbReference>
<dbReference type="PROSITE" id="PS50110">
    <property type="entry name" value="RESPONSE_REGULATORY"/>
    <property type="match status" value="1"/>
</dbReference>
<keyword id="KW-0963">Cytoplasm</keyword>
<keyword id="KW-0238">DNA-binding</keyword>
<keyword id="KW-0597">Phosphoprotein</keyword>
<keyword id="KW-1185">Reference proteome</keyword>
<keyword id="KW-0804">Transcription</keyword>
<keyword id="KW-0805">Transcription regulation</keyword>
<keyword id="KW-0902">Two-component regulatory system</keyword>
<reference key="1">
    <citation type="journal article" date="2003" name="Nature">
        <title>Genome sequence of Bacillus cereus and comparative analysis with Bacillus anthracis.</title>
        <authorList>
            <person name="Ivanova N."/>
            <person name="Sorokin A."/>
            <person name="Anderson I."/>
            <person name="Galleron N."/>
            <person name="Candelon B."/>
            <person name="Kapatral V."/>
            <person name="Bhattacharyya A."/>
            <person name="Reznik G."/>
            <person name="Mikhailova N."/>
            <person name="Lapidus A."/>
            <person name="Chu L."/>
            <person name="Mazur M."/>
            <person name="Goltsman E."/>
            <person name="Larsen N."/>
            <person name="D'Souza M."/>
            <person name="Walunas T."/>
            <person name="Grechkin Y."/>
            <person name="Pusch G."/>
            <person name="Haselkorn R."/>
            <person name="Fonstein M."/>
            <person name="Ehrlich S.D."/>
            <person name="Overbeek R."/>
            <person name="Kyrpides N.C."/>
        </authorList>
    </citation>
    <scope>NUCLEOTIDE SEQUENCE [LARGE SCALE GENOMIC DNA]</scope>
    <source>
        <strain>ATCC 14579 / DSM 31 / CCUG 7414 / JCM 2152 / NBRC 15305 / NCIMB 9373 / NCTC 2599 / NRRL B-3711</strain>
    </source>
</reference>
<sequence>MLKVLVVDDEMLARDELKYLLERTKEVEIIGEADCVEDALEELMQSRPDIVFLDIQLSDDNGFEIANILKKMKNPPAIVFATAYDQYALQAFEVDALDYILKPFDEERIVQTLKKYKKQKQSQIETKHEIKGTDVTVEMHKLALPIEESIVLVNIEDIVYVGLVDGKVTVKTMRETYVTHDTLVILEKKLPQVSFMRVHRSFIANINHITEIQPWFNSTYNLIMKEGSKVPVSRTYAKELKKLLRI</sequence>
<feature type="chain" id="PRO_0000081122" description="Sensory transduction protein LytT">
    <location>
        <begin position="1"/>
        <end position="246"/>
    </location>
</feature>
<feature type="domain" description="Response regulatory" evidence="2">
    <location>
        <begin position="3"/>
        <end position="117"/>
    </location>
</feature>
<feature type="domain" description="HTH LytTR-type" evidence="1">
    <location>
        <begin position="142"/>
        <end position="246"/>
    </location>
</feature>
<name>LYTT_BACCR</name>
<accession>Q814J1</accession>
<protein>
    <recommendedName>
        <fullName>Sensory transduction protein LytT</fullName>
    </recommendedName>
</protein>
<proteinExistence type="predicted"/>
<organism>
    <name type="scientific">Bacillus cereus (strain ATCC 14579 / DSM 31 / CCUG 7414 / JCM 2152 / NBRC 15305 / NCIMB 9373 / NCTC 2599 / NRRL B-3711)</name>
    <dbReference type="NCBI Taxonomy" id="226900"/>
    <lineage>
        <taxon>Bacteria</taxon>
        <taxon>Bacillati</taxon>
        <taxon>Bacillota</taxon>
        <taxon>Bacilli</taxon>
        <taxon>Bacillales</taxon>
        <taxon>Bacillaceae</taxon>
        <taxon>Bacillus</taxon>
        <taxon>Bacillus cereus group</taxon>
    </lineage>
</organism>
<evidence type="ECO:0000255" key="1">
    <source>
        <dbReference type="PROSITE-ProRule" id="PRU00112"/>
    </source>
</evidence>
<evidence type="ECO:0000255" key="2">
    <source>
        <dbReference type="PROSITE-ProRule" id="PRU00169"/>
    </source>
</evidence>
<evidence type="ECO:0000305" key="3"/>